<feature type="chain" id="PRO_0000405657" description="Altered inheritance of mitochondria protein 11">
    <location>
        <begin position="1"/>
        <end position="137"/>
    </location>
</feature>
<feature type="transmembrane region" description="Helical" evidence="1">
    <location>
        <begin position="20"/>
        <end position="37"/>
    </location>
</feature>
<feature type="transmembrane region" description="Helical" evidence="1">
    <location>
        <begin position="66"/>
        <end position="88"/>
    </location>
</feature>
<accession>A6ZR50</accession>
<proteinExistence type="inferred from homology"/>
<comment type="subcellular location">
    <subcellularLocation>
        <location evidence="2">Membrane</location>
        <topology evidence="2">Multi-pass membrane protein</topology>
    </subcellularLocation>
</comment>
<comment type="similarity">
    <text evidence="2">Belongs to the AIM11 family.</text>
</comment>
<gene>
    <name type="primary">AIM11</name>
    <name type="synonym">GEP8</name>
    <name type="ORF">SCY_1597</name>
</gene>
<protein>
    <recommendedName>
        <fullName>Altered inheritance of mitochondria protein 11</fullName>
    </recommendedName>
    <alternativeName>
        <fullName>Genetic interactor of prohibitins 8</fullName>
    </alternativeName>
</protein>
<keyword id="KW-0472">Membrane</keyword>
<keyword id="KW-0812">Transmembrane</keyword>
<keyword id="KW-1133">Transmembrane helix</keyword>
<sequence>MIEEKKERKKRRVLQMARFYGAAAFTLITMRLISRAIKVRKYVPSIFQQNYKLPPFSQRNEAMSALTYASAASIGTFSTLIFGFCWALDISTAREFVFKTREFMGVPQALETDTSMDEETSKLTKQLQDLLSSENNK</sequence>
<organism>
    <name type="scientific">Saccharomyces cerevisiae (strain YJM789)</name>
    <name type="common">Baker's yeast</name>
    <dbReference type="NCBI Taxonomy" id="307796"/>
    <lineage>
        <taxon>Eukaryota</taxon>
        <taxon>Fungi</taxon>
        <taxon>Dikarya</taxon>
        <taxon>Ascomycota</taxon>
        <taxon>Saccharomycotina</taxon>
        <taxon>Saccharomycetes</taxon>
        <taxon>Saccharomycetales</taxon>
        <taxon>Saccharomycetaceae</taxon>
        <taxon>Saccharomyces</taxon>
    </lineage>
</organism>
<evidence type="ECO:0000255" key="1"/>
<evidence type="ECO:0000305" key="2"/>
<name>AIM11_YEAS7</name>
<dbReference type="EMBL" id="AAFW02000048">
    <property type="protein sequence ID" value="EDN63070.1"/>
    <property type="molecule type" value="Genomic_DNA"/>
</dbReference>
<dbReference type="SMR" id="A6ZR50"/>
<dbReference type="HOGENOM" id="CLU_118700_0_0_1"/>
<dbReference type="Proteomes" id="UP000007060">
    <property type="component" value="Unassembled WGS sequence"/>
</dbReference>
<dbReference type="GO" id="GO:0016020">
    <property type="term" value="C:membrane"/>
    <property type="evidence" value="ECO:0007669"/>
    <property type="project" value="UniProtKB-SubCell"/>
</dbReference>
<dbReference type="GO" id="GO:0005739">
    <property type="term" value="C:mitochondrion"/>
    <property type="evidence" value="ECO:0007669"/>
    <property type="project" value="TreeGrafter"/>
</dbReference>
<dbReference type="InterPro" id="IPR038814">
    <property type="entry name" value="AIM11"/>
</dbReference>
<dbReference type="PANTHER" id="PTHR39136">
    <property type="entry name" value="ALTERED INHERITANCE OF MITOCHONDRIA PROTEIN 11"/>
    <property type="match status" value="1"/>
</dbReference>
<dbReference type="PANTHER" id="PTHR39136:SF1">
    <property type="entry name" value="ALTERED INHERITANCE OF MITOCHONDRIA PROTEIN 11"/>
    <property type="match status" value="1"/>
</dbReference>
<reference key="1">
    <citation type="journal article" date="2007" name="Proc. Natl. Acad. Sci. U.S.A.">
        <title>Genome sequencing and comparative analysis of Saccharomyces cerevisiae strain YJM789.</title>
        <authorList>
            <person name="Wei W."/>
            <person name="McCusker J.H."/>
            <person name="Hyman R.W."/>
            <person name="Jones T."/>
            <person name="Ning Y."/>
            <person name="Cao Z."/>
            <person name="Gu Z."/>
            <person name="Bruno D."/>
            <person name="Miranda M."/>
            <person name="Nguyen M."/>
            <person name="Wilhelmy J."/>
            <person name="Komp C."/>
            <person name="Tamse R."/>
            <person name="Wang X."/>
            <person name="Jia P."/>
            <person name="Luedi P."/>
            <person name="Oefner P.J."/>
            <person name="David L."/>
            <person name="Dietrich F.S."/>
            <person name="Li Y."/>
            <person name="Davis R.W."/>
            <person name="Steinmetz L.M."/>
        </authorList>
    </citation>
    <scope>NUCLEOTIDE SEQUENCE [LARGE SCALE GENOMIC DNA]</scope>
    <source>
        <strain>YJM789</strain>
    </source>
</reference>